<accession>P74323</accession>
<feature type="chain" id="PRO_0000075637" description="2-C-methyl-D-erythritol 4-phosphate cytidylyltransferase">
    <location>
        <begin position="1"/>
        <end position="230"/>
    </location>
</feature>
<feature type="site" description="Transition state stabilizer" evidence="1">
    <location>
        <position position="13"/>
    </location>
</feature>
<feature type="site" description="Transition state stabilizer" evidence="1">
    <location>
        <position position="20"/>
    </location>
</feature>
<feature type="site" description="Positions MEP for the nucleophilic attack" evidence="1">
    <location>
        <position position="152"/>
    </location>
</feature>
<feature type="site" description="Positions MEP for the nucleophilic attack" evidence="1">
    <location>
        <position position="208"/>
    </location>
</feature>
<reference key="1">
    <citation type="journal article" date="1996" name="DNA Res.">
        <title>Sequence analysis of the genome of the unicellular cyanobacterium Synechocystis sp. strain PCC6803. II. Sequence determination of the entire genome and assignment of potential protein-coding regions.</title>
        <authorList>
            <person name="Kaneko T."/>
            <person name="Sato S."/>
            <person name="Kotani H."/>
            <person name="Tanaka A."/>
            <person name="Asamizu E."/>
            <person name="Nakamura Y."/>
            <person name="Miyajima N."/>
            <person name="Hirosawa M."/>
            <person name="Sugiura M."/>
            <person name="Sasamoto S."/>
            <person name="Kimura T."/>
            <person name="Hosouchi T."/>
            <person name="Matsuno A."/>
            <person name="Muraki A."/>
            <person name="Nakazaki N."/>
            <person name="Naruo K."/>
            <person name="Okumura S."/>
            <person name="Shimpo S."/>
            <person name="Takeuchi C."/>
            <person name="Wada T."/>
            <person name="Watanabe A."/>
            <person name="Yamada M."/>
            <person name="Yasuda M."/>
            <person name="Tabata S."/>
        </authorList>
    </citation>
    <scope>NUCLEOTIDE SEQUENCE [LARGE SCALE GENOMIC DNA]</scope>
    <source>
        <strain>ATCC 27184 / PCC 6803 / Kazusa</strain>
    </source>
</reference>
<comment type="function">
    <text evidence="1">Catalyzes the formation of 4-diphosphocytidyl-2-C-methyl-D-erythritol from CTP and 2-C-methyl-D-erythritol 4-phosphate (MEP).</text>
</comment>
<comment type="catalytic activity">
    <reaction evidence="1">
        <text>2-C-methyl-D-erythritol 4-phosphate + CTP + H(+) = 4-CDP-2-C-methyl-D-erythritol + diphosphate</text>
        <dbReference type="Rhea" id="RHEA:13429"/>
        <dbReference type="ChEBI" id="CHEBI:15378"/>
        <dbReference type="ChEBI" id="CHEBI:33019"/>
        <dbReference type="ChEBI" id="CHEBI:37563"/>
        <dbReference type="ChEBI" id="CHEBI:57823"/>
        <dbReference type="ChEBI" id="CHEBI:58262"/>
        <dbReference type="EC" id="2.7.7.60"/>
    </reaction>
</comment>
<comment type="pathway">
    <text evidence="1">Isoprenoid biosynthesis; isopentenyl diphosphate biosynthesis via DXP pathway; isopentenyl diphosphate from 1-deoxy-D-xylulose 5-phosphate: step 2/6.</text>
</comment>
<comment type="similarity">
    <text evidence="1">Belongs to the IspD/TarI cytidylyltransferase family. IspD subfamily.</text>
</comment>
<organism>
    <name type="scientific">Synechocystis sp. (strain ATCC 27184 / PCC 6803 / Kazusa)</name>
    <dbReference type="NCBI Taxonomy" id="1111708"/>
    <lineage>
        <taxon>Bacteria</taxon>
        <taxon>Bacillati</taxon>
        <taxon>Cyanobacteriota</taxon>
        <taxon>Cyanophyceae</taxon>
        <taxon>Synechococcales</taxon>
        <taxon>Merismopediaceae</taxon>
        <taxon>Synechocystis</taxon>
    </lineage>
</organism>
<sequence length="230" mass="24643">MHLLIPAAGSGKRMGSGHNKLLLNVLGQPLLSWTVQAALASQSIEWIGIMGQPYDFPAFEALLTPLHSPKPVQLIVGGDTRQQSVFNGIQALPPGAKFVLIHDGARCLATPDLFDRCTEALQHCQGLIAAMPVKDTIKIVNADGWITDTPDRQGLWGAQTPQGFDVALLKACHDKGKQEGWEVTDDAALLEKCGQPVKIVPGEDTNLKITTPVDLAIAEFILGQRSAKSA</sequence>
<evidence type="ECO:0000255" key="1">
    <source>
        <dbReference type="HAMAP-Rule" id="MF_00108"/>
    </source>
</evidence>
<name>ISPD_SYNY3</name>
<gene>
    <name evidence="1" type="primary">ispD</name>
    <name type="ordered locus">slr0951</name>
</gene>
<protein>
    <recommendedName>
        <fullName evidence="1">2-C-methyl-D-erythritol 4-phosphate cytidylyltransferase</fullName>
        <ecNumber evidence="1">2.7.7.60</ecNumber>
    </recommendedName>
    <alternativeName>
        <fullName evidence="1">4-diphosphocytidyl-2C-methyl-D-erythritol synthase</fullName>
    </alternativeName>
    <alternativeName>
        <fullName evidence="1">MEP cytidylyltransferase</fullName>
        <shortName evidence="1">MCT</shortName>
    </alternativeName>
</protein>
<dbReference type="EC" id="2.7.7.60" evidence="1"/>
<dbReference type="EMBL" id="BA000022">
    <property type="protein sequence ID" value="BAA18417.1"/>
    <property type="molecule type" value="Genomic_DNA"/>
</dbReference>
<dbReference type="PIR" id="S76158">
    <property type="entry name" value="S76158"/>
</dbReference>
<dbReference type="SMR" id="P74323"/>
<dbReference type="FunCoup" id="P74323">
    <property type="interactions" value="311"/>
</dbReference>
<dbReference type="STRING" id="1148.gene:10499293"/>
<dbReference type="PaxDb" id="1148-1653504"/>
<dbReference type="EnsemblBacteria" id="BAA18417">
    <property type="protein sequence ID" value="BAA18417"/>
    <property type="gene ID" value="BAA18417"/>
</dbReference>
<dbReference type="KEGG" id="syn:slr0951"/>
<dbReference type="eggNOG" id="COG1211">
    <property type="taxonomic scope" value="Bacteria"/>
</dbReference>
<dbReference type="InParanoid" id="P74323"/>
<dbReference type="PhylomeDB" id="P74323"/>
<dbReference type="UniPathway" id="UPA00056">
    <property type="reaction ID" value="UER00093"/>
</dbReference>
<dbReference type="Proteomes" id="UP000001425">
    <property type="component" value="Chromosome"/>
</dbReference>
<dbReference type="GO" id="GO:0005829">
    <property type="term" value="C:cytosol"/>
    <property type="evidence" value="ECO:0000318"/>
    <property type="project" value="GO_Central"/>
</dbReference>
<dbReference type="GO" id="GO:0050518">
    <property type="term" value="F:2-C-methyl-D-erythritol 4-phosphate cytidylyltransferase activity"/>
    <property type="evidence" value="ECO:0007669"/>
    <property type="project" value="UniProtKB-UniRule"/>
</dbReference>
<dbReference type="GO" id="GO:0070567">
    <property type="term" value="F:cytidylyltransferase activity"/>
    <property type="evidence" value="ECO:0000318"/>
    <property type="project" value="GO_Central"/>
</dbReference>
<dbReference type="GO" id="GO:0019288">
    <property type="term" value="P:isopentenyl diphosphate biosynthetic process, methylerythritol 4-phosphate pathway"/>
    <property type="evidence" value="ECO:0007669"/>
    <property type="project" value="UniProtKB-UniRule"/>
</dbReference>
<dbReference type="CDD" id="cd02516">
    <property type="entry name" value="CDP-ME_synthetase"/>
    <property type="match status" value="1"/>
</dbReference>
<dbReference type="FunFam" id="3.90.550.10:FF:000003">
    <property type="entry name" value="2-C-methyl-D-erythritol 4-phosphate cytidylyltransferase"/>
    <property type="match status" value="1"/>
</dbReference>
<dbReference type="Gene3D" id="3.90.550.10">
    <property type="entry name" value="Spore Coat Polysaccharide Biosynthesis Protein SpsA, Chain A"/>
    <property type="match status" value="1"/>
</dbReference>
<dbReference type="HAMAP" id="MF_00108">
    <property type="entry name" value="IspD"/>
    <property type="match status" value="1"/>
</dbReference>
<dbReference type="InterPro" id="IPR001228">
    <property type="entry name" value="IspD"/>
</dbReference>
<dbReference type="InterPro" id="IPR034683">
    <property type="entry name" value="IspD/TarI"/>
</dbReference>
<dbReference type="InterPro" id="IPR018294">
    <property type="entry name" value="ISPD_synthase_CS"/>
</dbReference>
<dbReference type="InterPro" id="IPR029044">
    <property type="entry name" value="Nucleotide-diphossugar_trans"/>
</dbReference>
<dbReference type="NCBIfam" id="TIGR00453">
    <property type="entry name" value="ispD"/>
    <property type="match status" value="1"/>
</dbReference>
<dbReference type="PANTHER" id="PTHR43015">
    <property type="entry name" value="D-RIBITOL-5-PHOSPHATE CYTIDYLYLTRANSFERASE"/>
    <property type="match status" value="1"/>
</dbReference>
<dbReference type="PANTHER" id="PTHR43015:SF1">
    <property type="entry name" value="D-RIBITOL-5-PHOSPHATE CYTIDYLYLTRANSFERASE"/>
    <property type="match status" value="1"/>
</dbReference>
<dbReference type="Pfam" id="PF01128">
    <property type="entry name" value="IspD"/>
    <property type="match status" value="1"/>
</dbReference>
<dbReference type="SUPFAM" id="SSF53448">
    <property type="entry name" value="Nucleotide-diphospho-sugar transferases"/>
    <property type="match status" value="1"/>
</dbReference>
<dbReference type="PROSITE" id="PS01295">
    <property type="entry name" value="ISPD"/>
    <property type="match status" value="1"/>
</dbReference>
<proteinExistence type="inferred from homology"/>
<keyword id="KW-0414">Isoprene biosynthesis</keyword>
<keyword id="KW-0548">Nucleotidyltransferase</keyword>
<keyword id="KW-1185">Reference proteome</keyword>
<keyword id="KW-0808">Transferase</keyword>